<gene>
    <name evidence="1" type="primary">iscS</name>
    <name type="ordered locus">BUAP5A_594</name>
</gene>
<comment type="function">
    <text evidence="1">Master enzyme that delivers sulfur to a number of partners involved in Fe-S cluster assembly, tRNA modification or cofactor biosynthesis. Catalyzes the removal of elemental sulfur atoms from cysteine to produce alanine. Functions as a sulfur delivery protein for Fe-S cluster synthesis onto IscU, an Fe-S scaffold assembly protein, as well as other S acceptor proteins.</text>
</comment>
<comment type="catalytic activity">
    <reaction evidence="1">
        <text>(sulfur carrier)-H + L-cysteine = (sulfur carrier)-SH + L-alanine</text>
        <dbReference type="Rhea" id="RHEA:43892"/>
        <dbReference type="Rhea" id="RHEA-COMP:14737"/>
        <dbReference type="Rhea" id="RHEA-COMP:14739"/>
        <dbReference type="ChEBI" id="CHEBI:29917"/>
        <dbReference type="ChEBI" id="CHEBI:35235"/>
        <dbReference type="ChEBI" id="CHEBI:57972"/>
        <dbReference type="ChEBI" id="CHEBI:64428"/>
        <dbReference type="EC" id="2.8.1.7"/>
    </reaction>
</comment>
<comment type="cofactor">
    <cofactor evidence="1">
        <name>pyridoxal 5'-phosphate</name>
        <dbReference type="ChEBI" id="CHEBI:597326"/>
    </cofactor>
</comment>
<comment type="pathway">
    <text evidence="1">Cofactor biosynthesis; iron-sulfur cluster biosynthesis.</text>
</comment>
<comment type="subunit">
    <text evidence="1">Homodimer. Forms a heterotetramer with IscU, interacts with other sulfur acceptors.</text>
</comment>
<comment type="subcellular location">
    <subcellularLocation>
        <location evidence="1">Cytoplasm</location>
    </subcellularLocation>
</comment>
<comment type="similarity">
    <text evidence="1">Belongs to the class-V pyridoxal-phosphate-dependent aminotransferase family. NifS/IscS subfamily.</text>
</comment>
<proteinExistence type="inferred from homology"/>
<accession>B8D8F9</accession>
<sequence>MKTPIYLDYAATTPVEFEVAKKMMNYLTIDGVFGNSASRSHKFGWKAEEVVDIARNQISELIGADSREIVFTSGATESNNLAIKGIASFHQNKGKHIVTSKTEHKSVLDTCRYLENKGFTVTYLTPKNNGIIDLNNLKKNIKKDTILVSIMHVNNEIGIIQDINSISQICRNHGVFFHVDATQSVGKIPIDLKKIPIDLMSFSAHKIYGPKGIGGLYVRRKPRVRLLSLIHGGGHERGMRSGTLPVHQIVGMGESFVLAKRKIHDDFIHLTKLKNILWNGIKNIEEVYLNSDLQQGAPHILNVSFNYVEGESLIMALKDLAISSGSACTSASLEPSYVLKSLGIRDELAHSSIRFSIGRFTTEKEIIHAIKLVHKSIHRLRELSPLWEMFKSGVDLNSIEWDHV</sequence>
<dbReference type="EC" id="2.8.1.7" evidence="1"/>
<dbReference type="EMBL" id="CP001161">
    <property type="protein sequence ID" value="ACL30935.1"/>
    <property type="molecule type" value="Genomic_DNA"/>
</dbReference>
<dbReference type="RefSeq" id="WP_009874549.1">
    <property type="nucleotide sequence ID" value="NC_011833.1"/>
</dbReference>
<dbReference type="SMR" id="B8D8F9"/>
<dbReference type="KEGG" id="bap:BUAP5A_594"/>
<dbReference type="HOGENOM" id="CLU_003433_0_2_6"/>
<dbReference type="OrthoDB" id="9808002at2"/>
<dbReference type="UniPathway" id="UPA00266"/>
<dbReference type="Proteomes" id="UP000006904">
    <property type="component" value="Chromosome"/>
</dbReference>
<dbReference type="GO" id="GO:1990221">
    <property type="term" value="C:L-cysteine desulfurase complex"/>
    <property type="evidence" value="ECO:0007669"/>
    <property type="project" value="UniProtKB-ARBA"/>
</dbReference>
<dbReference type="GO" id="GO:0051537">
    <property type="term" value="F:2 iron, 2 sulfur cluster binding"/>
    <property type="evidence" value="ECO:0007669"/>
    <property type="project" value="UniProtKB-UniRule"/>
</dbReference>
<dbReference type="GO" id="GO:0031071">
    <property type="term" value="F:cysteine desulfurase activity"/>
    <property type="evidence" value="ECO:0007669"/>
    <property type="project" value="UniProtKB-UniRule"/>
</dbReference>
<dbReference type="GO" id="GO:0046872">
    <property type="term" value="F:metal ion binding"/>
    <property type="evidence" value="ECO:0007669"/>
    <property type="project" value="UniProtKB-KW"/>
</dbReference>
<dbReference type="GO" id="GO:0030170">
    <property type="term" value="F:pyridoxal phosphate binding"/>
    <property type="evidence" value="ECO:0007669"/>
    <property type="project" value="UniProtKB-UniRule"/>
</dbReference>
<dbReference type="GO" id="GO:0044571">
    <property type="term" value="P:[2Fe-2S] cluster assembly"/>
    <property type="evidence" value="ECO:0007669"/>
    <property type="project" value="UniProtKB-UniRule"/>
</dbReference>
<dbReference type="FunFam" id="3.40.640.10:FF:000003">
    <property type="entry name" value="Cysteine desulfurase IscS"/>
    <property type="match status" value="1"/>
</dbReference>
<dbReference type="FunFam" id="3.90.1150.10:FF:000002">
    <property type="entry name" value="Cysteine desulfurase IscS"/>
    <property type="match status" value="1"/>
</dbReference>
<dbReference type="Gene3D" id="3.90.1150.10">
    <property type="entry name" value="Aspartate Aminotransferase, domain 1"/>
    <property type="match status" value="1"/>
</dbReference>
<dbReference type="Gene3D" id="3.40.640.10">
    <property type="entry name" value="Type I PLP-dependent aspartate aminotransferase-like (Major domain)"/>
    <property type="match status" value="1"/>
</dbReference>
<dbReference type="HAMAP" id="MF_00331">
    <property type="entry name" value="Cys_desulf_IscS"/>
    <property type="match status" value="1"/>
</dbReference>
<dbReference type="InterPro" id="IPR000192">
    <property type="entry name" value="Aminotrans_V_dom"/>
</dbReference>
<dbReference type="InterPro" id="IPR020578">
    <property type="entry name" value="Aminotrans_V_PyrdxlP_BS"/>
</dbReference>
<dbReference type="InterPro" id="IPR010240">
    <property type="entry name" value="Cys_deSase_IscS"/>
</dbReference>
<dbReference type="InterPro" id="IPR016454">
    <property type="entry name" value="Cysteine_dSase"/>
</dbReference>
<dbReference type="InterPro" id="IPR015424">
    <property type="entry name" value="PyrdxlP-dep_Trfase"/>
</dbReference>
<dbReference type="InterPro" id="IPR015421">
    <property type="entry name" value="PyrdxlP-dep_Trfase_major"/>
</dbReference>
<dbReference type="InterPro" id="IPR015422">
    <property type="entry name" value="PyrdxlP-dep_Trfase_small"/>
</dbReference>
<dbReference type="NCBIfam" id="TIGR02006">
    <property type="entry name" value="IscS"/>
    <property type="match status" value="1"/>
</dbReference>
<dbReference type="NCBIfam" id="NF002806">
    <property type="entry name" value="PRK02948.1"/>
    <property type="match status" value="1"/>
</dbReference>
<dbReference type="NCBIfam" id="NF010611">
    <property type="entry name" value="PRK14012.1"/>
    <property type="match status" value="1"/>
</dbReference>
<dbReference type="PANTHER" id="PTHR11601:SF34">
    <property type="entry name" value="CYSTEINE DESULFURASE"/>
    <property type="match status" value="1"/>
</dbReference>
<dbReference type="PANTHER" id="PTHR11601">
    <property type="entry name" value="CYSTEINE DESULFURYLASE FAMILY MEMBER"/>
    <property type="match status" value="1"/>
</dbReference>
<dbReference type="Pfam" id="PF00266">
    <property type="entry name" value="Aminotran_5"/>
    <property type="match status" value="1"/>
</dbReference>
<dbReference type="PIRSF" id="PIRSF005572">
    <property type="entry name" value="NifS"/>
    <property type="match status" value="1"/>
</dbReference>
<dbReference type="SUPFAM" id="SSF53383">
    <property type="entry name" value="PLP-dependent transferases"/>
    <property type="match status" value="1"/>
</dbReference>
<dbReference type="PROSITE" id="PS00595">
    <property type="entry name" value="AA_TRANSFER_CLASS_5"/>
    <property type="match status" value="1"/>
</dbReference>
<feature type="chain" id="PRO_1000133111" description="Cysteine desulfurase IscS">
    <location>
        <begin position="1"/>
        <end position="404"/>
    </location>
</feature>
<feature type="active site" description="Cysteine persulfide intermediate" evidence="1">
    <location>
        <position position="328"/>
    </location>
</feature>
<feature type="binding site" evidence="1">
    <location>
        <begin position="75"/>
        <end position="76"/>
    </location>
    <ligand>
        <name>pyridoxal 5'-phosphate</name>
        <dbReference type="ChEBI" id="CHEBI:597326"/>
    </ligand>
</feature>
<feature type="binding site" evidence="1">
    <location>
        <position position="155"/>
    </location>
    <ligand>
        <name>pyridoxal 5'-phosphate</name>
        <dbReference type="ChEBI" id="CHEBI:597326"/>
    </ligand>
</feature>
<feature type="binding site" evidence="1">
    <location>
        <position position="183"/>
    </location>
    <ligand>
        <name>pyridoxal 5'-phosphate</name>
        <dbReference type="ChEBI" id="CHEBI:597326"/>
    </ligand>
</feature>
<feature type="binding site" evidence="1">
    <location>
        <begin position="203"/>
        <end position="205"/>
    </location>
    <ligand>
        <name>pyridoxal 5'-phosphate</name>
        <dbReference type="ChEBI" id="CHEBI:597326"/>
    </ligand>
</feature>
<feature type="binding site" evidence="1">
    <location>
        <position position="243"/>
    </location>
    <ligand>
        <name>pyridoxal 5'-phosphate</name>
        <dbReference type="ChEBI" id="CHEBI:597326"/>
    </ligand>
</feature>
<feature type="binding site" description="via persulfide group" evidence="1">
    <location>
        <position position="328"/>
    </location>
    <ligand>
        <name>[2Fe-2S] cluster</name>
        <dbReference type="ChEBI" id="CHEBI:190135"/>
        <note>ligand shared with IscU</note>
    </ligand>
</feature>
<feature type="modified residue" description="N6-(pyridoxal phosphate)lysine" evidence="1">
    <location>
        <position position="206"/>
    </location>
</feature>
<protein>
    <recommendedName>
        <fullName evidence="1">Cysteine desulfurase IscS</fullName>
        <ecNumber evidence="1">2.8.1.7</ecNumber>
    </recommendedName>
</protein>
<keyword id="KW-0001">2Fe-2S</keyword>
<keyword id="KW-0963">Cytoplasm</keyword>
<keyword id="KW-0408">Iron</keyword>
<keyword id="KW-0411">Iron-sulfur</keyword>
<keyword id="KW-0479">Metal-binding</keyword>
<keyword id="KW-0663">Pyridoxal phosphate</keyword>
<keyword id="KW-0808">Transferase</keyword>
<reference key="1">
    <citation type="journal article" date="2009" name="Science">
        <title>The dynamics and time scale of ongoing genomic erosion in symbiotic bacteria.</title>
        <authorList>
            <person name="Moran N.A."/>
            <person name="McLaughlin H.J."/>
            <person name="Sorek R."/>
        </authorList>
    </citation>
    <scope>NUCLEOTIDE SEQUENCE [LARGE SCALE GENOMIC DNA]</scope>
    <source>
        <strain>5A</strain>
    </source>
</reference>
<name>ISCS_BUCA5</name>
<organism>
    <name type="scientific">Buchnera aphidicola subsp. Acyrthosiphon pisum (strain 5A)</name>
    <dbReference type="NCBI Taxonomy" id="563178"/>
    <lineage>
        <taxon>Bacteria</taxon>
        <taxon>Pseudomonadati</taxon>
        <taxon>Pseudomonadota</taxon>
        <taxon>Gammaproteobacteria</taxon>
        <taxon>Enterobacterales</taxon>
        <taxon>Erwiniaceae</taxon>
        <taxon>Buchnera</taxon>
    </lineage>
</organism>
<evidence type="ECO:0000255" key="1">
    <source>
        <dbReference type="HAMAP-Rule" id="MF_00331"/>
    </source>
</evidence>